<comment type="function">
    <text>Component of the INO80 complex which remodels chromatin by shifting nucleosomes and is involved in DNA repair.</text>
</comment>
<comment type="subunit">
    <text evidence="3">Component of the INO80 chromatin remodeling complex.</text>
</comment>
<comment type="subcellular location">
    <subcellularLocation>
        <location evidence="2">Nucleus</location>
    </subcellularLocation>
    <subcellularLocation>
        <location evidence="2">Cytoplasm</location>
    </subcellularLocation>
</comment>
<sequence>MSISSDTSGSVPGSPIDLEPESETICHWQSCEQDLLTLDNLVHHIHNGTTSNLRLISNINSILDHIGNRRPKYTCEWDDCPRKGMVQTSRFALVAHLRSHTGEKPFICSVPECDRSFTRSDALAKHMRTVHEADTLRPSDPIPKAHPMHPQNVANAMVQSAREARAQQQMHGVGNTNEDVENWLDAASMPKTSHDMYRLQKRKLQWVKEERTMLANHLEALERKLIDARNRKEKILNEIVKQVDPSISR</sequence>
<dbReference type="EMBL" id="CU329670">
    <property type="protein sequence ID" value="CAB59682.1"/>
    <property type="molecule type" value="Genomic_DNA"/>
</dbReference>
<dbReference type="PIR" id="T37669">
    <property type="entry name" value="T37669"/>
</dbReference>
<dbReference type="RefSeq" id="NP_594663.1">
    <property type="nucleotide sequence ID" value="NM_001020092.2"/>
</dbReference>
<dbReference type="SMR" id="Q9UTM0"/>
<dbReference type="BioGRID" id="279300">
    <property type="interactions" value="26"/>
</dbReference>
<dbReference type="FunCoup" id="Q9UTM0">
    <property type="interactions" value="277"/>
</dbReference>
<dbReference type="STRING" id="284812.Q9UTM0"/>
<dbReference type="iPTMnet" id="Q9UTM0"/>
<dbReference type="PaxDb" id="4896-SPAC144.02.1"/>
<dbReference type="EnsemblFungi" id="SPAC144.02.1">
    <property type="protein sequence ID" value="SPAC144.02.1:pep"/>
    <property type="gene ID" value="SPAC144.02"/>
</dbReference>
<dbReference type="GeneID" id="2542854"/>
<dbReference type="KEGG" id="spo:2542854"/>
<dbReference type="PomBase" id="SPAC144.02">
    <property type="gene designation" value="iec1"/>
</dbReference>
<dbReference type="VEuPathDB" id="FungiDB:SPAC144.02"/>
<dbReference type="eggNOG" id="KOG1721">
    <property type="taxonomic scope" value="Eukaryota"/>
</dbReference>
<dbReference type="HOGENOM" id="CLU_046889_0_1_1"/>
<dbReference type="InParanoid" id="Q9UTM0"/>
<dbReference type="OMA" id="KAHPMHP"/>
<dbReference type="PhylomeDB" id="Q9UTM0"/>
<dbReference type="PRO" id="PR:Q9UTM0"/>
<dbReference type="Proteomes" id="UP000002485">
    <property type="component" value="Chromosome I"/>
</dbReference>
<dbReference type="GO" id="GO:0000785">
    <property type="term" value="C:chromatin"/>
    <property type="evidence" value="ECO:0000314"/>
    <property type="project" value="PomBase"/>
</dbReference>
<dbReference type="GO" id="GO:0005829">
    <property type="term" value="C:cytosol"/>
    <property type="evidence" value="ECO:0007005"/>
    <property type="project" value="PomBase"/>
</dbReference>
<dbReference type="GO" id="GO:0031011">
    <property type="term" value="C:Ino80 complex"/>
    <property type="evidence" value="ECO:0000314"/>
    <property type="project" value="PomBase"/>
</dbReference>
<dbReference type="GO" id="GO:0005634">
    <property type="term" value="C:nucleus"/>
    <property type="evidence" value="ECO:0007005"/>
    <property type="project" value="PomBase"/>
</dbReference>
<dbReference type="GO" id="GO:0000977">
    <property type="term" value="F:RNA polymerase II transcription regulatory region sequence-specific DNA binding"/>
    <property type="evidence" value="ECO:0007669"/>
    <property type="project" value="InterPro"/>
</dbReference>
<dbReference type="GO" id="GO:0008270">
    <property type="term" value="F:zinc ion binding"/>
    <property type="evidence" value="ECO:0007669"/>
    <property type="project" value="UniProtKB-KW"/>
</dbReference>
<dbReference type="GO" id="GO:0034080">
    <property type="term" value="P:CENP-A containing chromatin assembly"/>
    <property type="evidence" value="ECO:0000315"/>
    <property type="project" value="PomBase"/>
</dbReference>
<dbReference type="GO" id="GO:0006281">
    <property type="term" value="P:DNA repair"/>
    <property type="evidence" value="ECO:0007669"/>
    <property type="project" value="UniProtKB-KW"/>
</dbReference>
<dbReference type="GO" id="GO:0140861">
    <property type="term" value="P:DNA repair-dependent chromatin remodeling"/>
    <property type="evidence" value="ECO:0000269"/>
    <property type="project" value="PomBase"/>
</dbReference>
<dbReference type="GO" id="GO:0006357">
    <property type="term" value="P:regulation of transcription by RNA polymerase II"/>
    <property type="evidence" value="ECO:0007669"/>
    <property type="project" value="InterPro"/>
</dbReference>
<dbReference type="GO" id="GO:0045815">
    <property type="term" value="P:transcription initiation-coupled chromatin remodeling"/>
    <property type="evidence" value="ECO:0000269"/>
    <property type="project" value="PomBase"/>
</dbReference>
<dbReference type="FunFam" id="3.30.160.60:FF:000201">
    <property type="entry name" value="C2H2 finger domain protein (Gli3)"/>
    <property type="match status" value="1"/>
</dbReference>
<dbReference type="FunFam" id="3.30.160.60:FF:000031">
    <property type="entry name" value="GLI family zinc finger 3"/>
    <property type="match status" value="1"/>
</dbReference>
<dbReference type="Gene3D" id="3.30.160.60">
    <property type="entry name" value="Classic Zinc Finger"/>
    <property type="match status" value="2"/>
</dbReference>
<dbReference type="InterPro" id="IPR043359">
    <property type="entry name" value="GLI-like"/>
</dbReference>
<dbReference type="InterPro" id="IPR056436">
    <property type="entry name" value="Znf-C2H2_ZIC1-5/GLI1-3-like"/>
</dbReference>
<dbReference type="InterPro" id="IPR036236">
    <property type="entry name" value="Znf_C2H2_sf"/>
</dbReference>
<dbReference type="InterPro" id="IPR013087">
    <property type="entry name" value="Znf_C2H2_type"/>
</dbReference>
<dbReference type="PANTHER" id="PTHR45718">
    <property type="entry name" value="TRANSCRIPTIONAL ACTIVATOR CUBITUS INTERRUPTUS"/>
    <property type="match status" value="1"/>
</dbReference>
<dbReference type="PANTHER" id="PTHR45718:SF4">
    <property type="entry name" value="TRANSCRIPTIONAL ACTIVATOR CUBITUS INTERRUPTUS"/>
    <property type="match status" value="1"/>
</dbReference>
<dbReference type="Pfam" id="PF00096">
    <property type="entry name" value="zf-C2H2"/>
    <property type="match status" value="1"/>
</dbReference>
<dbReference type="Pfam" id="PF23561">
    <property type="entry name" value="zf-C2H2_15"/>
    <property type="match status" value="1"/>
</dbReference>
<dbReference type="SMART" id="SM00355">
    <property type="entry name" value="ZnF_C2H2"/>
    <property type="match status" value="2"/>
</dbReference>
<dbReference type="SUPFAM" id="SSF57667">
    <property type="entry name" value="beta-beta-alpha zinc fingers"/>
    <property type="match status" value="1"/>
</dbReference>
<dbReference type="PROSITE" id="PS00028">
    <property type="entry name" value="ZINC_FINGER_C2H2_1"/>
    <property type="match status" value="1"/>
</dbReference>
<dbReference type="PROSITE" id="PS50157">
    <property type="entry name" value="ZINC_FINGER_C2H2_2"/>
    <property type="match status" value="2"/>
</dbReference>
<accession>Q9UTM0</accession>
<keyword id="KW-0156">Chromatin regulator</keyword>
<keyword id="KW-0963">Cytoplasm</keyword>
<keyword id="KW-0227">DNA damage</keyword>
<keyword id="KW-0234">DNA repair</keyword>
<keyword id="KW-0238">DNA-binding</keyword>
<keyword id="KW-0479">Metal-binding</keyword>
<keyword id="KW-0539">Nucleus</keyword>
<keyword id="KW-1185">Reference proteome</keyword>
<keyword id="KW-0677">Repeat</keyword>
<keyword id="KW-0804">Transcription</keyword>
<keyword id="KW-0805">Transcription regulation</keyword>
<keyword id="KW-0862">Zinc</keyword>
<keyword id="KW-0863">Zinc-finger</keyword>
<gene>
    <name type="primary">iec1</name>
    <name type="ORF">SPAC144.02</name>
</gene>
<proteinExistence type="evidence at protein level"/>
<evidence type="ECO:0000255" key="1">
    <source>
        <dbReference type="PROSITE-ProRule" id="PRU00042"/>
    </source>
</evidence>
<evidence type="ECO:0000269" key="2">
    <source>
    </source>
</evidence>
<evidence type="ECO:0000269" key="3">
    <source>
    </source>
</evidence>
<reference key="1">
    <citation type="journal article" date="2002" name="Nature">
        <title>The genome sequence of Schizosaccharomyces pombe.</title>
        <authorList>
            <person name="Wood V."/>
            <person name="Gwilliam R."/>
            <person name="Rajandream M.A."/>
            <person name="Lyne M.H."/>
            <person name="Lyne R."/>
            <person name="Stewart A."/>
            <person name="Sgouros J.G."/>
            <person name="Peat N."/>
            <person name="Hayles J."/>
            <person name="Baker S.G."/>
            <person name="Basham D."/>
            <person name="Bowman S."/>
            <person name="Brooks K."/>
            <person name="Brown D."/>
            <person name="Brown S."/>
            <person name="Chillingworth T."/>
            <person name="Churcher C.M."/>
            <person name="Collins M."/>
            <person name="Connor R."/>
            <person name="Cronin A."/>
            <person name="Davis P."/>
            <person name="Feltwell T."/>
            <person name="Fraser A."/>
            <person name="Gentles S."/>
            <person name="Goble A."/>
            <person name="Hamlin N."/>
            <person name="Harris D.E."/>
            <person name="Hidalgo J."/>
            <person name="Hodgson G."/>
            <person name="Holroyd S."/>
            <person name="Hornsby T."/>
            <person name="Howarth S."/>
            <person name="Huckle E.J."/>
            <person name="Hunt S."/>
            <person name="Jagels K."/>
            <person name="James K.D."/>
            <person name="Jones L."/>
            <person name="Jones M."/>
            <person name="Leather S."/>
            <person name="McDonald S."/>
            <person name="McLean J."/>
            <person name="Mooney P."/>
            <person name="Moule S."/>
            <person name="Mungall K.L."/>
            <person name="Murphy L.D."/>
            <person name="Niblett D."/>
            <person name="Odell C."/>
            <person name="Oliver K."/>
            <person name="O'Neil S."/>
            <person name="Pearson D."/>
            <person name="Quail M.A."/>
            <person name="Rabbinowitsch E."/>
            <person name="Rutherford K.M."/>
            <person name="Rutter S."/>
            <person name="Saunders D."/>
            <person name="Seeger K."/>
            <person name="Sharp S."/>
            <person name="Skelton J."/>
            <person name="Simmonds M.N."/>
            <person name="Squares R."/>
            <person name="Squares S."/>
            <person name="Stevens K."/>
            <person name="Taylor K."/>
            <person name="Taylor R.G."/>
            <person name="Tivey A."/>
            <person name="Walsh S.V."/>
            <person name="Warren T."/>
            <person name="Whitehead S."/>
            <person name="Woodward J.R."/>
            <person name="Volckaert G."/>
            <person name="Aert R."/>
            <person name="Robben J."/>
            <person name="Grymonprez B."/>
            <person name="Weltjens I."/>
            <person name="Vanstreels E."/>
            <person name="Rieger M."/>
            <person name="Schaefer M."/>
            <person name="Mueller-Auer S."/>
            <person name="Gabel C."/>
            <person name="Fuchs M."/>
            <person name="Duesterhoeft A."/>
            <person name="Fritzc C."/>
            <person name="Holzer E."/>
            <person name="Moestl D."/>
            <person name="Hilbert H."/>
            <person name="Borzym K."/>
            <person name="Langer I."/>
            <person name="Beck A."/>
            <person name="Lehrach H."/>
            <person name="Reinhardt R."/>
            <person name="Pohl T.M."/>
            <person name="Eger P."/>
            <person name="Zimmermann W."/>
            <person name="Wedler H."/>
            <person name="Wambutt R."/>
            <person name="Purnelle B."/>
            <person name="Goffeau A."/>
            <person name="Cadieu E."/>
            <person name="Dreano S."/>
            <person name="Gloux S."/>
            <person name="Lelaure V."/>
            <person name="Mottier S."/>
            <person name="Galibert F."/>
            <person name="Aves S.J."/>
            <person name="Xiang Z."/>
            <person name="Hunt C."/>
            <person name="Moore K."/>
            <person name="Hurst S.M."/>
            <person name="Lucas M."/>
            <person name="Rochet M."/>
            <person name="Gaillardin C."/>
            <person name="Tallada V.A."/>
            <person name="Garzon A."/>
            <person name="Thode G."/>
            <person name="Daga R.R."/>
            <person name="Cruzado L."/>
            <person name="Jimenez J."/>
            <person name="Sanchez M."/>
            <person name="del Rey F."/>
            <person name="Benito J."/>
            <person name="Dominguez A."/>
            <person name="Revuelta J.L."/>
            <person name="Moreno S."/>
            <person name="Armstrong J."/>
            <person name="Forsburg S.L."/>
            <person name="Cerutti L."/>
            <person name="Lowe T."/>
            <person name="McCombie W.R."/>
            <person name="Paulsen I."/>
            <person name="Potashkin J."/>
            <person name="Shpakovski G.V."/>
            <person name="Ussery D."/>
            <person name="Barrell B.G."/>
            <person name="Nurse P."/>
        </authorList>
    </citation>
    <scope>NUCLEOTIDE SEQUENCE [LARGE SCALE GENOMIC DNA]</scope>
    <source>
        <strain>972 / ATCC 24843</strain>
    </source>
</reference>
<reference key="2">
    <citation type="journal article" date="2006" name="Nat. Biotechnol.">
        <title>ORFeome cloning and global analysis of protein localization in the fission yeast Schizosaccharomyces pombe.</title>
        <authorList>
            <person name="Matsuyama A."/>
            <person name="Arai R."/>
            <person name="Yashiroda Y."/>
            <person name="Shirai A."/>
            <person name="Kamata A."/>
            <person name="Sekido S."/>
            <person name="Kobayashi Y."/>
            <person name="Hashimoto A."/>
            <person name="Hamamoto M."/>
            <person name="Hiraoka Y."/>
            <person name="Horinouchi S."/>
            <person name="Yoshida M."/>
        </authorList>
    </citation>
    <scope>SUBCELLULAR LOCATION [LARGE SCALE ANALYSIS]</scope>
</reference>
<reference key="3">
    <citation type="journal article" date="2008" name="Genome Biol.">
        <title>Chromatin Central: towards the comparative proteome by accurate mapping of the yeast proteomic environment.</title>
        <authorList>
            <person name="Shevchenko A."/>
            <person name="Roguev A."/>
            <person name="Schaft D."/>
            <person name="Buchanan L."/>
            <person name="Habermann B."/>
            <person name="Sakalar C."/>
            <person name="Thomas H."/>
            <person name="Krogan N.J."/>
            <person name="Shevchenko A."/>
            <person name="Stewart A.F."/>
        </authorList>
    </citation>
    <scope>IDENTIFICATION IN THE INO80 COMPLEX</scope>
    <scope>IDENTIFICATION BY MASS SPECTROMETRY</scope>
</reference>
<feature type="chain" id="PRO_0000046868" description="INO80 complex subunit 1">
    <location>
        <begin position="1"/>
        <end position="249"/>
    </location>
</feature>
<feature type="zinc finger region" description="C2H2-type 1" evidence="1">
    <location>
        <begin position="73"/>
        <end position="100"/>
    </location>
</feature>
<feature type="zinc finger region" description="C2H2-type 2" evidence="1">
    <location>
        <begin position="106"/>
        <end position="131"/>
    </location>
</feature>
<protein>
    <recommendedName>
        <fullName>INO80 complex subunit 1</fullName>
    </recommendedName>
</protein>
<name>IEC1_SCHPO</name>
<organism>
    <name type="scientific">Schizosaccharomyces pombe (strain 972 / ATCC 24843)</name>
    <name type="common">Fission yeast</name>
    <dbReference type="NCBI Taxonomy" id="284812"/>
    <lineage>
        <taxon>Eukaryota</taxon>
        <taxon>Fungi</taxon>
        <taxon>Dikarya</taxon>
        <taxon>Ascomycota</taxon>
        <taxon>Taphrinomycotina</taxon>
        <taxon>Schizosaccharomycetes</taxon>
        <taxon>Schizosaccharomycetales</taxon>
        <taxon>Schizosaccharomycetaceae</taxon>
        <taxon>Schizosaccharomyces</taxon>
    </lineage>
</organism>